<feature type="chain" id="PRO_0000162385" description="Phenazine biosynthesis-like domain-containing protein 1">
    <location>
        <begin position="1"/>
        <end position="288"/>
    </location>
</feature>
<feature type="active site" evidence="1">
    <location>
        <position position="46"/>
    </location>
</feature>
<feature type="sequence conflict" description="In Ref. 1; BAB22369." evidence="2" ref="1">
    <original>A</original>
    <variation>P</variation>
    <location>
        <position position="209"/>
    </location>
</feature>
<reference key="1">
    <citation type="journal article" date="2005" name="Science">
        <title>The transcriptional landscape of the mammalian genome.</title>
        <authorList>
            <person name="Carninci P."/>
            <person name="Kasukawa T."/>
            <person name="Katayama S."/>
            <person name="Gough J."/>
            <person name="Frith M.C."/>
            <person name="Maeda N."/>
            <person name="Oyama R."/>
            <person name="Ravasi T."/>
            <person name="Lenhard B."/>
            <person name="Wells C."/>
            <person name="Kodzius R."/>
            <person name="Shimokawa K."/>
            <person name="Bajic V.B."/>
            <person name="Brenner S.E."/>
            <person name="Batalov S."/>
            <person name="Forrest A.R."/>
            <person name="Zavolan M."/>
            <person name="Davis M.J."/>
            <person name="Wilming L.G."/>
            <person name="Aidinis V."/>
            <person name="Allen J.E."/>
            <person name="Ambesi-Impiombato A."/>
            <person name="Apweiler R."/>
            <person name="Aturaliya R.N."/>
            <person name="Bailey T.L."/>
            <person name="Bansal M."/>
            <person name="Baxter L."/>
            <person name="Beisel K.W."/>
            <person name="Bersano T."/>
            <person name="Bono H."/>
            <person name="Chalk A.M."/>
            <person name="Chiu K.P."/>
            <person name="Choudhary V."/>
            <person name="Christoffels A."/>
            <person name="Clutterbuck D.R."/>
            <person name="Crowe M.L."/>
            <person name="Dalla E."/>
            <person name="Dalrymple B.P."/>
            <person name="de Bono B."/>
            <person name="Della Gatta G."/>
            <person name="di Bernardo D."/>
            <person name="Down T."/>
            <person name="Engstrom P."/>
            <person name="Fagiolini M."/>
            <person name="Faulkner G."/>
            <person name="Fletcher C.F."/>
            <person name="Fukushima T."/>
            <person name="Furuno M."/>
            <person name="Futaki S."/>
            <person name="Gariboldi M."/>
            <person name="Georgii-Hemming P."/>
            <person name="Gingeras T.R."/>
            <person name="Gojobori T."/>
            <person name="Green R.E."/>
            <person name="Gustincich S."/>
            <person name="Harbers M."/>
            <person name="Hayashi Y."/>
            <person name="Hensch T.K."/>
            <person name="Hirokawa N."/>
            <person name="Hill D."/>
            <person name="Huminiecki L."/>
            <person name="Iacono M."/>
            <person name="Ikeo K."/>
            <person name="Iwama A."/>
            <person name="Ishikawa T."/>
            <person name="Jakt M."/>
            <person name="Kanapin A."/>
            <person name="Katoh M."/>
            <person name="Kawasawa Y."/>
            <person name="Kelso J."/>
            <person name="Kitamura H."/>
            <person name="Kitano H."/>
            <person name="Kollias G."/>
            <person name="Krishnan S.P."/>
            <person name="Kruger A."/>
            <person name="Kummerfeld S.K."/>
            <person name="Kurochkin I.V."/>
            <person name="Lareau L.F."/>
            <person name="Lazarevic D."/>
            <person name="Lipovich L."/>
            <person name="Liu J."/>
            <person name="Liuni S."/>
            <person name="McWilliam S."/>
            <person name="Madan Babu M."/>
            <person name="Madera M."/>
            <person name="Marchionni L."/>
            <person name="Matsuda H."/>
            <person name="Matsuzawa S."/>
            <person name="Miki H."/>
            <person name="Mignone F."/>
            <person name="Miyake S."/>
            <person name="Morris K."/>
            <person name="Mottagui-Tabar S."/>
            <person name="Mulder N."/>
            <person name="Nakano N."/>
            <person name="Nakauchi H."/>
            <person name="Ng P."/>
            <person name="Nilsson R."/>
            <person name="Nishiguchi S."/>
            <person name="Nishikawa S."/>
            <person name="Nori F."/>
            <person name="Ohara O."/>
            <person name="Okazaki Y."/>
            <person name="Orlando V."/>
            <person name="Pang K.C."/>
            <person name="Pavan W.J."/>
            <person name="Pavesi G."/>
            <person name="Pesole G."/>
            <person name="Petrovsky N."/>
            <person name="Piazza S."/>
            <person name="Reed J."/>
            <person name="Reid J.F."/>
            <person name="Ring B.Z."/>
            <person name="Ringwald M."/>
            <person name="Rost B."/>
            <person name="Ruan Y."/>
            <person name="Salzberg S.L."/>
            <person name="Sandelin A."/>
            <person name="Schneider C."/>
            <person name="Schoenbach C."/>
            <person name="Sekiguchi K."/>
            <person name="Semple C.A."/>
            <person name="Seno S."/>
            <person name="Sessa L."/>
            <person name="Sheng Y."/>
            <person name="Shibata Y."/>
            <person name="Shimada H."/>
            <person name="Shimada K."/>
            <person name="Silva D."/>
            <person name="Sinclair B."/>
            <person name="Sperling S."/>
            <person name="Stupka E."/>
            <person name="Sugiura K."/>
            <person name="Sultana R."/>
            <person name="Takenaka Y."/>
            <person name="Taki K."/>
            <person name="Tammoja K."/>
            <person name="Tan S.L."/>
            <person name="Tang S."/>
            <person name="Taylor M.S."/>
            <person name="Tegner J."/>
            <person name="Teichmann S.A."/>
            <person name="Ueda H.R."/>
            <person name="van Nimwegen E."/>
            <person name="Verardo R."/>
            <person name="Wei C.L."/>
            <person name="Yagi K."/>
            <person name="Yamanishi H."/>
            <person name="Zabarovsky E."/>
            <person name="Zhu S."/>
            <person name="Zimmer A."/>
            <person name="Hide W."/>
            <person name="Bult C."/>
            <person name="Grimmond S.M."/>
            <person name="Teasdale R.D."/>
            <person name="Liu E.T."/>
            <person name="Brusic V."/>
            <person name="Quackenbush J."/>
            <person name="Wahlestedt C."/>
            <person name="Mattick J.S."/>
            <person name="Hume D.A."/>
            <person name="Kai C."/>
            <person name="Sasaki D."/>
            <person name="Tomaru Y."/>
            <person name="Fukuda S."/>
            <person name="Kanamori-Katayama M."/>
            <person name="Suzuki M."/>
            <person name="Aoki J."/>
            <person name="Arakawa T."/>
            <person name="Iida J."/>
            <person name="Imamura K."/>
            <person name="Itoh M."/>
            <person name="Kato T."/>
            <person name="Kawaji H."/>
            <person name="Kawagashira N."/>
            <person name="Kawashima T."/>
            <person name="Kojima M."/>
            <person name="Kondo S."/>
            <person name="Konno H."/>
            <person name="Nakano K."/>
            <person name="Ninomiya N."/>
            <person name="Nishio T."/>
            <person name="Okada M."/>
            <person name="Plessy C."/>
            <person name="Shibata K."/>
            <person name="Shiraki T."/>
            <person name="Suzuki S."/>
            <person name="Tagami M."/>
            <person name="Waki K."/>
            <person name="Watahiki A."/>
            <person name="Okamura-Oho Y."/>
            <person name="Suzuki H."/>
            <person name="Kawai J."/>
            <person name="Hayashizaki Y."/>
        </authorList>
    </citation>
    <scope>NUCLEOTIDE SEQUENCE [LARGE SCALE MRNA]</scope>
    <source>
        <strain>C57BL/6J</strain>
        <tissue>Kidney</tissue>
    </source>
</reference>
<reference key="2">
    <citation type="journal article" date="2004" name="Genome Res.">
        <title>The status, quality, and expansion of the NIH full-length cDNA project: the Mammalian Gene Collection (MGC).</title>
        <authorList>
            <consortium name="The MGC Project Team"/>
        </authorList>
    </citation>
    <scope>NUCLEOTIDE SEQUENCE [LARGE SCALE MRNA]</scope>
    <source>
        <strain>FVB/N</strain>
        <tissue>Kidney</tissue>
    </source>
</reference>
<reference key="3">
    <citation type="journal article" date="2010" name="Cell">
        <title>A tissue-specific atlas of mouse protein phosphorylation and expression.</title>
        <authorList>
            <person name="Huttlin E.L."/>
            <person name="Jedrychowski M.P."/>
            <person name="Elias J.E."/>
            <person name="Goswami T."/>
            <person name="Rad R."/>
            <person name="Beausoleil S.A."/>
            <person name="Villen J."/>
            <person name="Haas W."/>
            <person name="Sowa M.E."/>
            <person name="Gygi S.P."/>
        </authorList>
    </citation>
    <scope>IDENTIFICATION BY MASS SPECTROMETRY [LARGE SCALE ANALYSIS]</scope>
    <source>
        <tissue>Brown adipose tissue</tissue>
        <tissue>Kidney</tissue>
        <tissue>Liver</tissue>
        <tissue>Pancreas</tissue>
    </source>
</reference>
<accession>Q9DCG6</accession>
<accession>Q8VCF3</accession>
<organism>
    <name type="scientific">Mus musculus</name>
    <name type="common">Mouse</name>
    <dbReference type="NCBI Taxonomy" id="10090"/>
    <lineage>
        <taxon>Eukaryota</taxon>
        <taxon>Metazoa</taxon>
        <taxon>Chordata</taxon>
        <taxon>Craniata</taxon>
        <taxon>Vertebrata</taxon>
        <taxon>Euteleostomi</taxon>
        <taxon>Mammalia</taxon>
        <taxon>Eutheria</taxon>
        <taxon>Euarchontoglires</taxon>
        <taxon>Glires</taxon>
        <taxon>Rodentia</taxon>
        <taxon>Myomorpha</taxon>
        <taxon>Muroidea</taxon>
        <taxon>Muridae</taxon>
        <taxon>Murinae</taxon>
        <taxon>Mus</taxon>
        <taxon>Mus</taxon>
    </lineage>
</organism>
<name>PBLD1_MOUSE</name>
<protein>
    <recommendedName>
        <fullName>Phenazine biosynthesis-like domain-containing protein 1</fullName>
        <ecNumber>5.1.-.-</ecNumber>
    </recommendedName>
</protein>
<keyword id="KW-0413">Isomerase</keyword>
<keyword id="KW-1185">Reference proteome</keyword>
<sequence length="288" mass="32048">MKLPIFIADAFTATAFRGNPAAVCLLERTLEEDAHQQIAREMNLSETAFIRKLQPTDSFTQSSRFGLRWFTPVSEVPLCGHATLASAAVLFHKIQNRNSTLTFVTMSGELKARRAEDGIVLDFPVYPTFPQDFHEVEDLIKAAIGDTLVQDIRYSTDTRKLLVRLSDSYDRSFLESLKVNTEPLPAIEKTGKVRGLILTVKGEPGGQTAPYDFYSRYFAPWVGIAEDPVTGSAHTVLSSYWSQQLRKKEMRAFQCSRRGGELDISLRPDGRVDIKGGAVIVLEGTLTA</sequence>
<proteinExistence type="evidence at protein level"/>
<evidence type="ECO:0000250" key="1"/>
<evidence type="ECO:0000305" key="2"/>
<dbReference type="EC" id="5.1.-.-"/>
<dbReference type="EMBL" id="AK002802">
    <property type="protein sequence ID" value="BAB22369.1"/>
    <property type="molecule type" value="mRNA"/>
</dbReference>
<dbReference type="EMBL" id="AK143947">
    <property type="protein sequence ID" value="BAE25623.1"/>
    <property type="molecule type" value="mRNA"/>
</dbReference>
<dbReference type="EMBL" id="BC019997">
    <property type="protein sequence ID" value="AAH19997.1"/>
    <property type="molecule type" value="mRNA"/>
</dbReference>
<dbReference type="CCDS" id="CCDS23895.1"/>
<dbReference type="RefSeq" id="NP_001346458.1">
    <property type="nucleotide sequence ID" value="NM_001359529.1"/>
</dbReference>
<dbReference type="RefSeq" id="NP_080977.2">
    <property type="nucleotide sequence ID" value="NM_026701.2"/>
</dbReference>
<dbReference type="RefSeq" id="XP_006514095.1">
    <property type="nucleotide sequence ID" value="XM_006514032.3"/>
</dbReference>
<dbReference type="SMR" id="Q9DCG6"/>
<dbReference type="BioGRID" id="212825">
    <property type="interactions" value="2"/>
</dbReference>
<dbReference type="FunCoup" id="Q9DCG6">
    <property type="interactions" value="400"/>
</dbReference>
<dbReference type="STRING" id="10090.ENSMUSP00000136589"/>
<dbReference type="iPTMnet" id="Q9DCG6"/>
<dbReference type="PhosphoSitePlus" id="Q9DCG6"/>
<dbReference type="SwissPalm" id="Q9DCG6"/>
<dbReference type="jPOST" id="Q9DCG6"/>
<dbReference type="ProteomicsDB" id="287963"/>
<dbReference type="DNASU" id="68371"/>
<dbReference type="Ensembl" id="ENSMUST00000178684.3">
    <property type="protein sequence ID" value="ENSMUSP00000136589.2"/>
    <property type="gene ID" value="ENSMUSG00000112129.2"/>
</dbReference>
<dbReference type="GeneID" id="68371"/>
<dbReference type="KEGG" id="mmu:68371"/>
<dbReference type="UCSC" id="uc007fju.1">
    <property type="organism name" value="mouse"/>
</dbReference>
<dbReference type="AGR" id="MGI:1915621"/>
<dbReference type="CTD" id="68371"/>
<dbReference type="MGI" id="MGI:1915621">
    <property type="gene designation" value="Pbld1"/>
</dbReference>
<dbReference type="VEuPathDB" id="HostDB:ENSMUSG00000112129"/>
<dbReference type="GeneTree" id="ENSGT00390000017595"/>
<dbReference type="HOGENOM" id="CLU_048756_2_0_1"/>
<dbReference type="InParanoid" id="Q9DCG6"/>
<dbReference type="OrthoDB" id="75169at2759"/>
<dbReference type="PhylomeDB" id="Q9DCG6"/>
<dbReference type="BioGRID-ORCS" id="68371">
    <property type="hits" value="1 hit in 43 CRISPR screens"/>
</dbReference>
<dbReference type="ChiTaRS" id="Pbld1">
    <property type="organism name" value="mouse"/>
</dbReference>
<dbReference type="PRO" id="PR:Q9DCG6"/>
<dbReference type="Proteomes" id="UP000000589">
    <property type="component" value="Chromosome 10"/>
</dbReference>
<dbReference type="RNAct" id="Q9DCG6">
    <property type="molecule type" value="protein"/>
</dbReference>
<dbReference type="Bgee" id="ENSMUSG00000112129">
    <property type="expression patterns" value="Expressed in right kidney and 61 other cell types or tissues"/>
</dbReference>
<dbReference type="ExpressionAtlas" id="Q9DCG6">
    <property type="expression patterns" value="baseline and differential"/>
</dbReference>
<dbReference type="GO" id="GO:0016853">
    <property type="term" value="F:isomerase activity"/>
    <property type="evidence" value="ECO:0007669"/>
    <property type="project" value="UniProtKB-KW"/>
</dbReference>
<dbReference type="GO" id="GO:0009058">
    <property type="term" value="P:biosynthetic process"/>
    <property type="evidence" value="ECO:0007669"/>
    <property type="project" value="InterPro"/>
</dbReference>
<dbReference type="FunFam" id="3.10.310.10:FF:000013">
    <property type="entry name" value="Phenazine biosynthesis-like domain-containing protein 1"/>
    <property type="match status" value="1"/>
</dbReference>
<dbReference type="FunFam" id="3.10.310.10:FF:000020">
    <property type="entry name" value="Phenazine biosynthesis-like domain-containing protein 1"/>
    <property type="match status" value="1"/>
</dbReference>
<dbReference type="Gene3D" id="3.10.310.10">
    <property type="entry name" value="Diaminopimelate Epimerase, Chain A, domain 1"/>
    <property type="match status" value="2"/>
</dbReference>
<dbReference type="InterPro" id="IPR003719">
    <property type="entry name" value="Phenazine_PhzF-like"/>
</dbReference>
<dbReference type="NCBIfam" id="TIGR00654">
    <property type="entry name" value="PhzF_family"/>
    <property type="match status" value="1"/>
</dbReference>
<dbReference type="PANTHER" id="PTHR13774">
    <property type="entry name" value="PHENAZINE BIOSYNTHESIS PROTEIN"/>
    <property type="match status" value="1"/>
</dbReference>
<dbReference type="PANTHER" id="PTHR13774:SF17">
    <property type="entry name" value="PHENAZINE BIOSYNTHESIS-LIKE DOMAIN-CONTAINING PROTEIN"/>
    <property type="match status" value="1"/>
</dbReference>
<dbReference type="Pfam" id="PF02567">
    <property type="entry name" value="PhzC-PhzF"/>
    <property type="match status" value="1"/>
</dbReference>
<dbReference type="PIRSF" id="PIRSF016184">
    <property type="entry name" value="PhzC_PhzF"/>
    <property type="match status" value="1"/>
</dbReference>
<dbReference type="SUPFAM" id="SSF54506">
    <property type="entry name" value="Diaminopimelate epimerase-like"/>
    <property type="match status" value="1"/>
</dbReference>
<comment type="similarity">
    <text evidence="2">Belongs to the PhzF family.</text>
</comment>
<gene>
    <name type="primary">Pbld1</name>
    <name type="synonym">Mawbp2</name>
    <name type="synonym">Pbld</name>
</gene>